<proteinExistence type="inferred from homology"/>
<protein>
    <recommendedName>
        <fullName evidence="1">ATP synthase subunit b</fullName>
    </recommendedName>
    <alternativeName>
        <fullName evidence="1">ATP synthase F(0) sector subunit b</fullName>
    </alternativeName>
    <alternativeName>
        <fullName evidence="1">ATPase subunit I</fullName>
    </alternativeName>
    <alternativeName>
        <fullName evidence="1">F-type ATPase subunit b</fullName>
        <shortName evidence="1">F-ATPase subunit b</shortName>
    </alternativeName>
</protein>
<evidence type="ECO:0000255" key="1">
    <source>
        <dbReference type="HAMAP-Rule" id="MF_01398"/>
    </source>
</evidence>
<gene>
    <name evidence="1" type="primary">atpF</name>
    <name type="ordered locus">Maqu_3879</name>
</gene>
<keyword id="KW-0066">ATP synthesis</keyword>
<keyword id="KW-0997">Cell inner membrane</keyword>
<keyword id="KW-1003">Cell membrane</keyword>
<keyword id="KW-0138">CF(0)</keyword>
<keyword id="KW-0375">Hydrogen ion transport</keyword>
<keyword id="KW-0406">Ion transport</keyword>
<keyword id="KW-0472">Membrane</keyword>
<keyword id="KW-0812">Transmembrane</keyword>
<keyword id="KW-1133">Transmembrane helix</keyword>
<keyword id="KW-0813">Transport</keyword>
<comment type="function">
    <text evidence="1">F(1)F(0) ATP synthase produces ATP from ADP in the presence of a proton or sodium gradient. F-type ATPases consist of two structural domains, F(1) containing the extramembraneous catalytic core and F(0) containing the membrane proton channel, linked together by a central stalk and a peripheral stalk. During catalysis, ATP synthesis in the catalytic domain of F(1) is coupled via a rotary mechanism of the central stalk subunits to proton translocation.</text>
</comment>
<comment type="function">
    <text evidence="1">Component of the F(0) channel, it forms part of the peripheral stalk, linking F(1) to F(0).</text>
</comment>
<comment type="subunit">
    <text evidence="1">F-type ATPases have 2 components, F(1) - the catalytic core - and F(0) - the membrane proton channel. F(1) has five subunits: alpha(3), beta(3), gamma(1), delta(1), epsilon(1). F(0) has three main subunits: a(1), b(2) and c(10-14). The alpha and beta chains form an alternating ring which encloses part of the gamma chain. F(1) is attached to F(0) by a central stalk formed by the gamma and epsilon chains, while a peripheral stalk is formed by the delta and b chains.</text>
</comment>
<comment type="subcellular location">
    <subcellularLocation>
        <location evidence="1">Cell inner membrane</location>
        <topology evidence="1">Single-pass membrane protein</topology>
    </subcellularLocation>
</comment>
<comment type="similarity">
    <text evidence="1">Belongs to the ATPase B chain family.</text>
</comment>
<reference key="1">
    <citation type="journal article" date="2011" name="Appl. Environ. Microbiol.">
        <title>Genomic potential of Marinobacter aquaeolei, a biogeochemical 'opportunitroph'.</title>
        <authorList>
            <person name="Singer E."/>
            <person name="Webb E.A."/>
            <person name="Nelson W.C."/>
            <person name="Heidelberg J.F."/>
            <person name="Ivanova N."/>
            <person name="Pati A."/>
            <person name="Edwards K.J."/>
        </authorList>
    </citation>
    <scope>NUCLEOTIDE SEQUENCE [LARGE SCALE GENOMIC DNA]</scope>
    <source>
        <strain>ATCC 700491 / DSM 11845 / VT8</strain>
    </source>
</reference>
<sequence>MNINLTLIGQSIAFAIFVWFCVKYVWPPITAAMEARQKKIADGLSAADRASLDLELAQEKATKELQKAKEEAAALIDQANKRAAQIVEASKEDARKEGEKLIEQARAEIQQERVQARDALRAEVATLAVAGAEKILETSVDAKAHSEMLEKLAAEL</sequence>
<dbReference type="EMBL" id="CP000514">
    <property type="protein sequence ID" value="ABM20947.1"/>
    <property type="molecule type" value="Genomic_DNA"/>
</dbReference>
<dbReference type="RefSeq" id="WP_011787280.1">
    <property type="nucleotide sequence ID" value="NC_008740.1"/>
</dbReference>
<dbReference type="SMR" id="A1U7H8"/>
<dbReference type="STRING" id="351348.Maqu_3879"/>
<dbReference type="GeneID" id="31823151"/>
<dbReference type="KEGG" id="maq:Maqu_3879"/>
<dbReference type="eggNOG" id="COG0711">
    <property type="taxonomic scope" value="Bacteria"/>
</dbReference>
<dbReference type="HOGENOM" id="CLU_079215_4_5_6"/>
<dbReference type="OrthoDB" id="9788020at2"/>
<dbReference type="Proteomes" id="UP000000998">
    <property type="component" value="Chromosome"/>
</dbReference>
<dbReference type="GO" id="GO:0005886">
    <property type="term" value="C:plasma membrane"/>
    <property type="evidence" value="ECO:0007669"/>
    <property type="project" value="UniProtKB-SubCell"/>
</dbReference>
<dbReference type="GO" id="GO:0045259">
    <property type="term" value="C:proton-transporting ATP synthase complex"/>
    <property type="evidence" value="ECO:0007669"/>
    <property type="project" value="UniProtKB-KW"/>
</dbReference>
<dbReference type="GO" id="GO:0046933">
    <property type="term" value="F:proton-transporting ATP synthase activity, rotational mechanism"/>
    <property type="evidence" value="ECO:0007669"/>
    <property type="project" value="UniProtKB-UniRule"/>
</dbReference>
<dbReference type="GO" id="GO:0046961">
    <property type="term" value="F:proton-transporting ATPase activity, rotational mechanism"/>
    <property type="evidence" value="ECO:0007669"/>
    <property type="project" value="TreeGrafter"/>
</dbReference>
<dbReference type="CDD" id="cd06503">
    <property type="entry name" value="ATP-synt_Fo_b"/>
    <property type="match status" value="1"/>
</dbReference>
<dbReference type="Gene3D" id="6.10.250.1580">
    <property type="match status" value="1"/>
</dbReference>
<dbReference type="HAMAP" id="MF_01398">
    <property type="entry name" value="ATP_synth_b_bprime"/>
    <property type="match status" value="1"/>
</dbReference>
<dbReference type="InterPro" id="IPR028987">
    <property type="entry name" value="ATP_synth_B-like_membr_sf"/>
</dbReference>
<dbReference type="InterPro" id="IPR002146">
    <property type="entry name" value="ATP_synth_b/b'su_bac/chlpt"/>
</dbReference>
<dbReference type="InterPro" id="IPR005864">
    <property type="entry name" value="ATP_synth_F0_bsu_bac"/>
</dbReference>
<dbReference type="InterPro" id="IPR050059">
    <property type="entry name" value="ATP_synthase_B_chain"/>
</dbReference>
<dbReference type="NCBIfam" id="TIGR01144">
    <property type="entry name" value="ATP_synt_b"/>
    <property type="match status" value="1"/>
</dbReference>
<dbReference type="NCBIfam" id="NF004411">
    <property type="entry name" value="PRK05759.1-2"/>
    <property type="match status" value="1"/>
</dbReference>
<dbReference type="NCBIfam" id="NF004413">
    <property type="entry name" value="PRK05759.1-4"/>
    <property type="match status" value="1"/>
</dbReference>
<dbReference type="PANTHER" id="PTHR33445:SF1">
    <property type="entry name" value="ATP SYNTHASE SUBUNIT B"/>
    <property type="match status" value="1"/>
</dbReference>
<dbReference type="PANTHER" id="PTHR33445">
    <property type="entry name" value="ATP SYNTHASE SUBUNIT B', CHLOROPLASTIC"/>
    <property type="match status" value="1"/>
</dbReference>
<dbReference type="Pfam" id="PF00430">
    <property type="entry name" value="ATP-synt_B"/>
    <property type="match status" value="1"/>
</dbReference>
<dbReference type="SUPFAM" id="SSF81573">
    <property type="entry name" value="F1F0 ATP synthase subunit B, membrane domain"/>
    <property type="match status" value="1"/>
</dbReference>
<feature type="chain" id="PRO_0000368576" description="ATP synthase subunit b">
    <location>
        <begin position="1"/>
        <end position="156"/>
    </location>
</feature>
<feature type="transmembrane region" description="Helical" evidence="1">
    <location>
        <begin position="12"/>
        <end position="32"/>
    </location>
</feature>
<organism>
    <name type="scientific">Marinobacter nauticus (strain ATCC 700491 / DSM 11845 / VT8)</name>
    <name type="common">Marinobacter aquaeolei</name>
    <dbReference type="NCBI Taxonomy" id="351348"/>
    <lineage>
        <taxon>Bacteria</taxon>
        <taxon>Pseudomonadati</taxon>
        <taxon>Pseudomonadota</taxon>
        <taxon>Gammaproteobacteria</taxon>
        <taxon>Pseudomonadales</taxon>
        <taxon>Marinobacteraceae</taxon>
        <taxon>Marinobacter</taxon>
    </lineage>
</organism>
<accession>A1U7H8</accession>
<name>ATPF_MARN8</name>